<protein>
    <recommendedName>
        <fullName evidence="1">ADP-L-glycero-D-manno-heptose-6-epimerase</fullName>
        <ecNumber evidence="1">5.1.3.20</ecNumber>
    </recommendedName>
    <alternativeName>
        <fullName evidence="1">ADP-L-glycero-beta-D-manno-heptose-6-epimerase</fullName>
        <shortName evidence="1">ADP-glyceromanno-heptose 6-epimerase</shortName>
        <shortName evidence="1">ADP-hep 6-epimerase</shortName>
        <shortName evidence="1">AGME</shortName>
    </alternativeName>
</protein>
<dbReference type="EC" id="5.1.3.20" evidence="1"/>
<dbReference type="EMBL" id="CP000822">
    <property type="protein sequence ID" value="ABV16121.1"/>
    <property type="molecule type" value="Genomic_DNA"/>
</dbReference>
<dbReference type="SMR" id="A8ARK8"/>
<dbReference type="STRING" id="290338.CKO_05078"/>
<dbReference type="GeneID" id="45138532"/>
<dbReference type="KEGG" id="cko:CKO_05078"/>
<dbReference type="HOGENOM" id="CLU_007383_1_3_6"/>
<dbReference type="OrthoDB" id="9803010at2"/>
<dbReference type="UniPathway" id="UPA00356">
    <property type="reaction ID" value="UER00440"/>
</dbReference>
<dbReference type="Proteomes" id="UP000008148">
    <property type="component" value="Chromosome"/>
</dbReference>
<dbReference type="GO" id="GO:0008712">
    <property type="term" value="F:ADP-glyceromanno-heptose 6-epimerase activity"/>
    <property type="evidence" value="ECO:0007669"/>
    <property type="project" value="UniProtKB-UniRule"/>
</dbReference>
<dbReference type="GO" id="GO:0050661">
    <property type="term" value="F:NADP binding"/>
    <property type="evidence" value="ECO:0007669"/>
    <property type="project" value="InterPro"/>
</dbReference>
<dbReference type="GO" id="GO:0097171">
    <property type="term" value="P:ADP-L-glycero-beta-D-manno-heptose biosynthetic process"/>
    <property type="evidence" value="ECO:0007669"/>
    <property type="project" value="UniProtKB-UniPathway"/>
</dbReference>
<dbReference type="GO" id="GO:0005975">
    <property type="term" value="P:carbohydrate metabolic process"/>
    <property type="evidence" value="ECO:0007669"/>
    <property type="project" value="UniProtKB-UniRule"/>
</dbReference>
<dbReference type="CDD" id="cd05248">
    <property type="entry name" value="ADP_GME_SDR_e"/>
    <property type="match status" value="1"/>
</dbReference>
<dbReference type="Gene3D" id="3.40.50.720">
    <property type="entry name" value="NAD(P)-binding Rossmann-like Domain"/>
    <property type="match status" value="1"/>
</dbReference>
<dbReference type="Gene3D" id="3.90.25.10">
    <property type="entry name" value="UDP-galactose 4-epimerase, domain 1"/>
    <property type="match status" value="1"/>
</dbReference>
<dbReference type="HAMAP" id="MF_01601">
    <property type="entry name" value="Heptose_epimerase"/>
    <property type="match status" value="1"/>
</dbReference>
<dbReference type="InterPro" id="IPR001509">
    <property type="entry name" value="Epimerase_deHydtase"/>
</dbReference>
<dbReference type="InterPro" id="IPR011912">
    <property type="entry name" value="Heptose_epim"/>
</dbReference>
<dbReference type="InterPro" id="IPR036291">
    <property type="entry name" value="NAD(P)-bd_dom_sf"/>
</dbReference>
<dbReference type="NCBIfam" id="TIGR02197">
    <property type="entry name" value="heptose_epim"/>
    <property type="match status" value="1"/>
</dbReference>
<dbReference type="NCBIfam" id="NF008360">
    <property type="entry name" value="PRK11150.1"/>
    <property type="match status" value="1"/>
</dbReference>
<dbReference type="PANTHER" id="PTHR43103:SF3">
    <property type="entry name" value="ADP-L-GLYCERO-D-MANNO-HEPTOSE-6-EPIMERASE"/>
    <property type="match status" value="1"/>
</dbReference>
<dbReference type="PANTHER" id="PTHR43103">
    <property type="entry name" value="NUCLEOSIDE-DIPHOSPHATE-SUGAR EPIMERASE"/>
    <property type="match status" value="1"/>
</dbReference>
<dbReference type="Pfam" id="PF01370">
    <property type="entry name" value="Epimerase"/>
    <property type="match status" value="1"/>
</dbReference>
<dbReference type="SUPFAM" id="SSF51735">
    <property type="entry name" value="NAD(P)-binding Rossmann-fold domains"/>
    <property type="match status" value="1"/>
</dbReference>
<feature type="chain" id="PRO_1000069351" description="ADP-L-glycero-D-manno-heptose-6-epimerase">
    <location>
        <begin position="1"/>
        <end position="310"/>
    </location>
</feature>
<feature type="active site" description="Proton acceptor" evidence="1">
    <location>
        <position position="140"/>
    </location>
</feature>
<feature type="active site" description="Proton acceptor" evidence="1">
    <location>
        <position position="178"/>
    </location>
</feature>
<feature type="binding site" evidence="1">
    <location>
        <begin position="10"/>
        <end position="11"/>
    </location>
    <ligand>
        <name>NADP(+)</name>
        <dbReference type="ChEBI" id="CHEBI:58349"/>
    </ligand>
</feature>
<feature type="binding site" evidence="1">
    <location>
        <begin position="31"/>
        <end position="32"/>
    </location>
    <ligand>
        <name>NADP(+)</name>
        <dbReference type="ChEBI" id="CHEBI:58349"/>
    </ligand>
</feature>
<feature type="binding site" evidence="1">
    <location>
        <position position="38"/>
    </location>
    <ligand>
        <name>NADP(+)</name>
        <dbReference type="ChEBI" id="CHEBI:58349"/>
    </ligand>
</feature>
<feature type="binding site" evidence="1">
    <location>
        <position position="53"/>
    </location>
    <ligand>
        <name>NADP(+)</name>
        <dbReference type="ChEBI" id="CHEBI:58349"/>
    </ligand>
</feature>
<feature type="binding site" evidence="1">
    <location>
        <begin position="75"/>
        <end position="79"/>
    </location>
    <ligand>
        <name>NADP(+)</name>
        <dbReference type="ChEBI" id="CHEBI:58349"/>
    </ligand>
</feature>
<feature type="binding site" evidence="1">
    <location>
        <position position="92"/>
    </location>
    <ligand>
        <name>NADP(+)</name>
        <dbReference type="ChEBI" id="CHEBI:58349"/>
    </ligand>
</feature>
<feature type="binding site" evidence="1">
    <location>
        <position position="144"/>
    </location>
    <ligand>
        <name>NADP(+)</name>
        <dbReference type="ChEBI" id="CHEBI:58349"/>
    </ligand>
</feature>
<feature type="binding site" evidence="1">
    <location>
        <position position="169"/>
    </location>
    <ligand>
        <name>substrate</name>
    </ligand>
</feature>
<feature type="binding site" evidence="1">
    <location>
        <position position="170"/>
    </location>
    <ligand>
        <name>NADP(+)</name>
        <dbReference type="ChEBI" id="CHEBI:58349"/>
    </ligand>
</feature>
<feature type="binding site" evidence="1">
    <location>
        <position position="178"/>
    </location>
    <ligand>
        <name>NADP(+)</name>
        <dbReference type="ChEBI" id="CHEBI:58349"/>
    </ligand>
</feature>
<feature type="binding site" evidence="1">
    <location>
        <position position="180"/>
    </location>
    <ligand>
        <name>substrate</name>
    </ligand>
</feature>
<feature type="binding site" evidence="1">
    <location>
        <position position="187"/>
    </location>
    <ligand>
        <name>substrate</name>
    </ligand>
</feature>
<feature type="binding site" evidence="1">
    <location>
        <begin position="201"/>
        <end position="204"/>
    </location>
    <ligand>
        <name>substrate</name>
    </ligand>
</feature>
<feature type="binding site" evidence="1">
    <location>
        <position position="209"/>
    </location>
    <ligand>
        <name>substrate</name>
    </ligand>
</feature>
<feature type="binding site" evidence="1">
    <location>
        <position position="272"/>
    </location>
    <ligand>
        <name>substrate</name>
    </ligand>
</feature>
<keyword id="KW-0119">Carbohydrate metabolism</keyword>
<keyword id="KW-0413">Isomerase</keyword>
<keyword id="KW-0521">NADP</keyword>
<keyword id="KW-1185">Reference proteome</keyword>
<sequence>MIIVTGGAGFIGSNIVKSLNDKGITDILVVDNLKDGTKFVNLVDLNIADYMDKEDFLIQIMAGEEFGDIEAVFHEGACSSTTEWDGKYMMDNNYQYSKELLHYCLERDIPFLYASSAATYGGRTSDFIESREYEKPLNVYGYSKFLFDEYVRQILPEASSQIVGFRYFNVYGPREGHKGSMASVAFHLNTQLNNGETPKLFEGSENFKRDFVYVGDVADVNLWFWENGVSGIFNLGTGRAESFQAVADAALAYHKKSDLEYIPFPEKLKGRYQAFTQADLTNLRAAGYDKPFKTVAEGVTEYMAWLNRDA</sequence>
<reference key="1">
    <citation type="submission" date="2007-08" db="EMBL/GenBank/DDBJ databases">
        <authorList>
            <consortium name="The Citrobacter koseri Genome Sequencing Project"/>
            <person name="McClelland M."/>
            <person name="Sanderson E.K."/>
            <person name="Porwollik S."/>
            <person name="Spieth J."/>
            <person name="Clifton W.S."/>
            <person name="Latreille P."/>
            <person name="Courtney L."/>
            <person name="Wang C."/>
            <person name="Pepin K."/>
            <person name="Bhonagiri V."/>
            <person name="Nash W."/>
            <person name="Johnson M."/>
            <person name="Thiruvilangam P."/>
            <person name="Wilson R."/>
        </authorList>
    </citation>
    <scope>NUCLEOTIDE SEQUENCE [LARGE SCALE GENOMIC DNA]</scope>
    <source>
        <strain>ATCC BAA-895 / CDC 4225-83 / SGSC4696</strain>
    </source>
</reference>
<name>HLDD_CITK8</name>
<organism>
    <name type="scientific">Citrobacter koseri (strain ATCC BAA-895 / CDC 4225-83 / SGSC4696)</name>
    <dbReference type="NCBI Taxonomy" id="290338"/>
    <lineage>
        <taxon>Bacteria</taxon>
        <taxon>Pseudomonadati</taxon>
        <taxon>Pseudomonadota</taxon>
        <taxon>Gammaproteobacteria</taxon>
        <taxon>Enterobacterales</taxon>
        <taxon>Enterobacteriaceae</taxon>
        <taxon>Citrobacter</taxon>
    </lineage>
</organism>
<comment type="function">
    <text evidence="1">Catalyzes the interconversion between ADP-D-glycero-beta-D-manno-heptose and ADP-L-glycero-beta-D-manno-heptose via an epimerization at carbon 6 of the heptose.</text>
</comment>
<comment type="catalytic activity">
    <reaction evidence="1">
        <text>ADP-D-glycero-beta-D-manno-heptose = ADP-L-glycero-beta-D-manno-heptose</text>
        <dbReference type="Rhea" id="RHEA:17577"/>
        <dbReference type="ChEBI" id="CHEBI:59967"/>
        <dbReference type="ChEBI" id="CHEBI:61506"/>
        <dbReference type="EC" id="5.1.3.20"/>
    </reaction>
</comment>
<comment type="cofactor">
    <cofactor evidence="1">
        <name>NADP(+)</name>
        <dbReference type="ChEBI" id="CHEBI:58349"/>
    </cofactor>
    <text evidence="1">Binds 1 NADP(+) per subunit.</text>
</comment>
<comment type="pathway">
    <text evidence="1">Nucleotide-sugar biosynthesis; ADP-L-glycero-beta-D-manno-heptose biosynthesis; ADP-L-glycero-beta-D-manno-heptose from D-glycero-beta-D-manno-heptose 7-phosphate: step 4/4.</text>
</comment>
<comment type="subunit">
    <text evidence="1">Homopentamer.</text>
</comment>
<comment type="domain">
    <text evidence="1">Contains a large N-terminal NADP-binding domain, and a smaller C-terminal substrate-binding domain.</text>
</comment>
<comment type="similarity">
    <text evidence="1">Belongs to the NAD(P)-dependent epimerase/dehydratase family. HldD subfamily.</text>
</comment>
<accession>A8ARK8</accession>
<gene>
    <name evidence="1" type="primary">hldD</name>
    <name type="ordered locus">CKO_05078</name>
</gene>
<proteinExistence type="inferred from homology"/>
<evidence type="ECO:0000255" key="1">
    <source>
        <dbReference type="HAMAP-Rule" id="MF_01601"/>
    </source>
</evidence>